<proteinExistence type="evidence at protein level"/>
<keyword id="KW-0106">Calcium</keyword>
<keyword id="KW-0965">Cell junction</keyword>
<keyword id="KW-1003">Cell membrane</keyword>
<keyword id="KW-0963">Cytoplasm</keyword>
<keyword id="KW-0206">Cytoskeleton</keyword>
<keyword id="KW-0223">Dioxygenase</keyword>
<keyword id="KW-0408">Iron</keyword>
<keyword id="KW-0443">Lipid metabolism</keyword>
<keyword id="KW-0446">Lipid-binding</keyword>
<keyword id="KW-0472">Membrane</keyword>
<keyword id="KW-0479">Metal-binding</keyword>
<keyword id="KW-0539">Nucleus</keyword>
<keyword id="KW-0560">Oxidoreductase</keyword>
<keyword id="KW-1185">Reference proteome</keyword>
<dbReference type="EC" id="1.13.11.33" evidence="5"/>
<dbReference type="EC" id="1.13.11.-" evidence="5"/>
<dbReference type="EMBL" id="AF415240">
    <property type="protein sequence ID" value="AAN03708.1"/>
    <property type="molecule type" value="mRNA"/>
</dbReference>
<dbReference type="RefSeq" id="NP_695213.1">
    <property type="nucleotide sequence ID" value="NM_153301.2"/>
</dbReference>
<dbReference type="SMR" id="Q8K4F2"/>
<dbReference type="FunCoup" id="Q8K4F2">
    <property type="interactions" value="5"/>
</dbReference>
<dbReference type="STRING" id="10116.ENSRNOP00000010416"/>
<dbReference type="BindingDB" id="Q8K4F2"/>
<dbReference type="ChEMBL" id="CHEMBL3289"/>
<dbReference type="PhosphoSitePlus" id="Q8K4F2"/>
<dbReference type="PaxDb" id="10116-ENSRNOP00000010416"/>
<dbReference type="GeneID" id="266604"/>
<dbReference type="KEGG" id="rno:266604"/>
<dbReference type="UCSC" id="RGD:628809">
    <property type="organism name" value="rat"/>
</dbReference>
<dbReference type="AGR" id="RGD:628809"/>
<dbReference type="CTD" id="247"/>
<dbReference type="RGD" id="628809">
    <property type="gene designation" value="Alox15b"/>
</dbReference>
<dbReference type="eggNOG" id="ENOG502QVKD">
    <property type="taxonomic scope" value="Eukaryota"/>
</dbReference>
<dbReference type="InParanoid" id="Q8K4F2"/>
<dbReference type="OrthoDB" id="44257at9989"/>
<dbReference type="PhylomeDB" id="Q8K4F2"/>
<dbReference type="BRENDA" id="1.13.11.33">
    <property type="organism ID" value="5301"/>
</dbReference>
<dbReference type="Reactome" id="R-RNO-2142770">
    <property type="pathway name" value="Synthesis of 15-eicosatetraenoic acid derivatives"/>
</dbReference>
<dbReference type="UniPathway" id="UPA00881"/>
<dbReference type="PRO" id="PR:Q8K4F2"/>
<dbReference type="Proteomes" id="UP000002494">
    <property type="component" value="Unplaced"/>
</dbReference>
<dbReference type="GO" id="GO:0005912">
    <property type="term" value="C:adherens junction"/>
    <property type="evidence" value="ECO:0000250"/>
    <property type="project" value="UniProtKB"/>
</dbReference>
<dbReference type="GO" id="GO:0005856">
    <property type="term" value="C:cytoskeleton"/>
    <property type="evidence" value="ECO:0000266"/>
    <property type="project" value="RGD"/>
</dbReference>
<dbReference type="GO" id="GO:0005829">
    <property type="term" value="C:cytosol"/>
    <property type="evidence" value="ECO:0000250"/>
    <property type="project" value="UniProtKB"/>
</dbReference>
<dbReference type="GO" id="GO:0005925">
    <property type="term" value="C:focal adhesion"/>
    <property type="evidence" value="ECO:0000250"/>
    <property type="project" value="UniProtKB"/>
</dbReference>
<dbReference type="GO" id="GO:0016020">
    <property type="term" value="C:membrane"/>
    <property type="evidence" value="ECO:0000250"/>
    <property type="project" value="UniProtKB"/>
</dbReference>
<dbReference type="GO" id="GO:0005886">
    <property type="term" value="C:plasma membrane"/>
    <property type="evidence" value="ECO:0000250"/>
    <property type="project" value="UniProtKB"/>
</dbReference>
<dbReference type="GO" id="GO:0050473">
    <property type="term" value="F:arachidonate 15-lipoxygenase activity"/>
    <property type="evidence" value="ECO:0000314"/>
    <property type="project" value="UniProtKB"/>
</dbReference>
<dbReference type="GO" id="GO:0036403">
    <property type="term" value="F:arachidonate 8(S)-lipoxygenase activity"/>
    <property type="evidence" value="ECO:0000266"/>
    <property type="project" value="RGD"/>
</dbReference>
<dbReference type="GO" id="GO:0005509">
    <property type="term" value="F:calcium ion binding"/>
    <property type="evidence" value="ECO:0000250"/>
    <property type="project" value="UniProtKB"/>
</dbReference>
<dbReference type="GO" id="GO:0005506">
    <property type="term" value="F:iron ion binding"/>
    <property type="evidence" value="ECO:0000250"/>
    <property type="project" value="UniProtKB"/>
</dbReference>
<dbReference type="GO" id="GO:0016165">
    <property type="term" value="F:linoleate 13S-lipoxygenase activity"/>
    <property type="evidence" value="ECO:0000266"/>
    <property type="project" value="RGD"/>
</dbReference>
<dbReference type="GO" id="GO:1990136">
    <property type="term" value="F:linoleate 9S-lipoxygenase activity"/>
    <property type="evidence" value="ECO:0000266"/>
    <property type="project" value="RGD"/>
</dbReference>
<dbReference type="GO" id="GO:0008289">
    <property type="term" value="F:lipid binding"/>
    <property type="evidence" value="ECO:0007669"/>
    <property type="project" value="UniProtKB-KW"/>
</dbReference>
<dbReference type="GO" id="GO:0019369">
    <property type="term" value="P:arachidonate metabolic process"/>
    <property type="evidence" value="ECO:0000314"/>
    <property type="project" value="UniProtKB"/>
</dbReference>
<dbReference type="GO" id="GO:1901696">
    <property type="term" value="P:cannabinoid biosynthetic process"/>
    <property type="evidence" value="ECO:0000250"/>
    <property type="project" value="UniProtKB"/>
</dbReference>
<dbReference type="GO" id="GO:0071926">
    <property type="term" value="P:endocannabinoid signaling pathway"/>
    <property type="evidence" value="ECO:0000250"/>
    <property type="project" value="UniProtKB"/>
</dbReference>
<dbReference type="GO" id="GO:0051122">
    <property type="term" value="P:hepoxilin biosynthetic process"/>
    <property type="evidence" value="ECO:0000314"/>
    <property type="project" value="UniProtKB"/>
</dbReference>
<dbReference type="GO" id="GO:0043651">
    <property type="term" value="P:linoleic acid metabolic process"/>
    <property type="evidence" value="ECO:0000266"/>
    <property type="project" value="RGD"/>
</dbReference>
<dbReference type="GO" id="GO:0006629">
    <property type="term" value="P:lipid metabolic process"/>
    <property type="evidence" value="ECO:0000266"/>
    <property type="project" value="RGD"/>
</dbReference>
<dbReference type="GO" id="GO:0034440">
    <property type="term" value="P:lipid oxidation"/>
    <property type="evidence" value="ECO:0000318"/>
    <property type="project" value="GO_Central"/>
</dbReference>
<dbReference type="GO" id="GO:2001303">
    <property type="term" value="P:lipoxin A4 biosynthetic process"/>
    <property type="evidence" value="ECO:0000250"/>
    <property type="project" value="UniProtKB"/>
</dbReference>
<dbReference type="GO" id="GO:0019372">
    <property type="term" value="P:lipoxygenase pathway"/>
    <property type="evidence" value="ECO:0000314"/>
    <property type="project" value="UniProtKB"/>
</dbReference>
<dbReference type="GO" id="GO:0045786">
    <property type="term" value="P:negative regulation of cell cycle"/>
    <property type="evidence" value="ECO:0000266"/>
    <property type="project" value="RGD"/>
</dbReference>
<dbReference type="GO" id="GO:0008285">
    <property type="term" value="P:negative regulation of cell population proliferation"/>
    <property type="evidence" value="ECO:0000266"/>
    <property type="project" value="RGD"/>
</dbReference>
<dbReference type="GO" id="GO:0045926">
    <property type="term" value="P:negative regulation of growth"/>
    <property type="evidence" value="ECO:0000266"/>
    <property type="project" value="RGD"/>
</dbReference>
<dbReference type="GO" id="GO:0006644">
    <property type="term" value="P:phospholipid metabolic process"/>
    <property type="evidence" value="ECO:0000250"/>
    <property type="project" value="UniProtKB"/>
</dbReference>
<dbReference type="GO" id="GO:0032722">
    <property type="term" value="P:positive regulation of chemokine production"/>
    <property type="evidence" value="ECO:0000266"/>
    <property type="project" value="RGD"/>
</dbReference>
<dbReference type="GO" id="GO:0045618">
    <property type="term" value="P:positive regulation of keratinocyte differentiation"/>
    <property type="evidence" value="ECO:0000266"/>
    <property type="project" value="RGD"/>
</dbReference>
<dbReference type="GO" id="GO:0010744">
    <property type="term" value="P:positive regulation of macrophage derived foam cell differentiation"/>
    <property type="evidence" value="ECO:0000266"/>
    <property type="project" value="RGD"/>
</dbReference>
<dbReference type="GO" id="GO:0035360">
    <property type="term" value="P:positive regulation of peroxisome proliferator activated receptor signaling pathway"/>
    <property type="evidence" value="ECO:0000266"/>
    <property type="project" value="RGD"/>
</dbReference>
<dbReference type="CDD" id="cd01753">
    <property type="entry name" value="PLAT_LOX"/>
    <property type="match status" value="1"/>
</dbReference>
<dbReference type="FunFam" id="3.10.450.60:FF:000001">
    <property type="entry name" value="arachidonate 12-lipoxygenase, 12R-type"/>
    <property type="match status" value="1"/>
</dbReference>
<dbReference type="FunFam" id="1.20.245.10:FF:000001">
    <property type="entry name" value="Arachidonate 5-lipoxygenase a"/>
    <property type="match status" value="1"/>
</dbReference>
<dbReference type="FunFam" id="2.60.60.20:FF:000002">
    <property type="entry name" value="Arachidonate 5-lipoxygenase a"/>
    <property type="match status" value="1"/>
</dbReference>
<dbReference type="Gene3D" id="3.10.450.60">
    <property type="match status" value="1"/>
</dbReference>
<dbReference type="Gene3D" id="1.20.245.10">
    <property type="entry name" value="Lipoxygenase-1, Domain 5"/>
    <property type="match status" value="1"/>
</dbReference>
<dbReference type="Gene3D" id="2.60.60.20">
    <property type="entry name" value="PLAT/LH2 domain"/>
    <property type="match status" value="1"/>
</dbReference>
<dbReference type="InterPro" id="IPR000907">
    <property type="entry name" value="LipOase"/>
</dbReference>
<dbReference type="InterPro" id="IPR013819">
    <property type="entry name" value="LipOase_C"/>
</dbReference>
<dbReference type="InterPro" id="IPR036226">
    <property type="entry name" value="LipOase_C_sf"/>
</dbReference>
<dbReference type="InterPro" id="IPR020834">
    <property type="entry name" value="LipOase_CS"/>
</dbReference>
<dbReference type="InterPro" id="IPR020833">
    <property type="entry name" value="LipOase_Fe_BS"/>
</dbReference>
<dbReference type="InterPro" id="IPR001885">
    <property type="entry name" value="LipOase_mml"/>
</dbReference>
<dbReference type="InterPro" id="IPR001024">
    <property type="entry name" value="PLAT/LH2_dom"/>
</dbReference>
<dbReference type="InterPro" id="IPR036392">
    <property type="entry name" value="PLAT/LH2_dom_sf"/>
</dbReference>
<dbReference type="InterPro" id="IPR042062">
    <property type="entry name" value="PLAT_LOX_verte"/>
</dbReference>
<dbReference type="PANTHER" id="PTHR11771">
    <property type="entry name" value="LIPOXYGENASE"/>
    <property type="match status" value="1"/>
</dbReference>
<dbReference type="Pfam" id="PF00305">
    <property type="entry name" value="Lipoxygenase"/>
    <property type="match status" value="1"/>
</dbReference>
<dbReference type="Pfam" id="PF01477">
    <property type="entry name" value="PLAT"/>
    <property type="match status" value="1"/>
</dbReference>
<dbReference type="PRINTS" id="PR00087">
    <property type="entry name" value="LIPOXYGENASE"/>
</dbReference>
<dbReference type="PRINTS" id="PR00467">
    <property type="entry name" value="MAMLPOXGNASE"/>
</dbReference>
<dbReference type="SMART" id="SM00308">
    <property type="entry name" value="LH2"/>
    <property type="match status" value="1"/>
</dbReference>
<dbReference type="SUPFAM" id="SSF49723">
    <property type="entry name" value="Lipase/lipooxygenase domain (PLAT/LH2 domain)"/>
    <property type="match status" value="1"/>
</dbReference>
<dbReference type="SUPFAM" id="SSF48484">
    <property type="entry name" value="Lipoxigenase"/>
    <property type="match status" value="1"/>
</dbReference>
<dbReference type="PROSITE" id="PS00711">
    <property type="entry name" value="LIPOXYGENASE_1"/>
    <property type="match status" value="1"/>
</dbReference>
<dbReference type="PROSITE" id="PS00081">
    <property type="entry name" value="LIPOXYGENASE_2"/>
    <property type="match status" value="1"/>
</dbReference>
<dbReference type="PROSITE" id="PS51393">
    <property type="entry name" value="LIPOXYGENASE_3"/>
    <property type="match status" value="1"/>
</dbReference>
<dbReference type="PROSITE" id="PS50095">
    <property type="entry name" value="PLAT"/>
    <property type="match status" value="1"/>
</dbReference>
<comment type="function">
    <text evidence="2 5">Non-heme iron-containing dioxygenase that catalyzes the stereo-specific peroxidation of free and esterified polyunsaturated fatty acids (PUFAs) generating a spectrum of bioactive lipid mediators (PubMed:23382512). Inserts a peroxyl group at C15 of arachidonate ((5Z,8Z,11Z,14Z)-eicosatetraenoate) producing (15S)-hydroperoxyeicosatetraenoate/(15S)-HPETE (PubMed:23382512). Also peroxidizes linoleate ((9Z,12Z)-octadecadienoate) to 13-hydroperoxyoctadecadienoate/13-HPODE (PubMed:23382512). Oxygenates arachidonyl derivatives such as 2-arachidonoylglycerol (2-AG) leading to the production and extracellular release of 15-hydroxyeicosatetraenoyl glycerol (15-HETE-G) that acts as a peroxisome proliferator-activated receptor alpha agonist. Has the ability to efficiently class-switch ALOX5 pro-inflammatory mediators into anti-inflammatory intermediates. Participates in the sequential oxidations of DHA ((4Z,7Z,10Z,13Z,16Z,19Z)-docosahexaenoate) to generate specialized pro-resolving mediators (SPMs) resolvin D5 ((7S,17S)-diHPDHA), which can actively down-regulate the immune response and have anti-aggregation properties with platelets. In addition to free PUFAs hydrolyzed from phospholipids, it directly oxidizes PUFAs esterified to membrane-bound phospholipids. Has no detectable 8S-lipoxygenase activity on arachidonate but reacts with (8S)-HPETE to produce (8S,15S)-diHPETE. May regulate progression through the cell cycle and cell proliferation. May also regulate cytokine secretion by macrophages and therefore play a role in the immune response. May also regulate macrophage differentiation into proatherogenic foam cells (By similarity).</text>
</comment>
<comment type="catalytic activity">
    <reaction evidence="5">
        <text>(5Z,8Z,11Z,14Z)-eicosatetraenoate + O2 = (15S)-hydroperoxy-(5Z,8Z,11Z,13E)-eicosatetraenoate</text>
        <dbReference type="Rhea" id="RHEA:16869"/>
        <dbReference type="ChEBI" id="CHEBI:15379"/>
        <dbReference type="ChEBI" id="CHEBI:32395"/>
        <dbReference type="ChEBI" id="CHEBI:57446"/>
        <dbReference type="EC" id="1.13.11.33"/>
    </reaction>
    <physiologicalReaction direction="left-to-right" evidence="7">
        <dbReference type="Rhea" id="RHEA:16870"/>
    </physiologicalReaction>
</comment>
<comment type="catalytic activity">
    <reaction evidence="5">
        <text>(9Z,12Z)-octadecadienoate + O2 = 13-hydroperoxy-(9Z,11E)-octadecadienoate</text>
        <dbReference type="Rhea" id="RHEA:48848"/>
        <dbReference type="ChEBI" id="CHEBI:15379"/>
        <dbReference type="ChEBI" id="CHEBI:30245"/>
        <dbReference type="ChEBI" id="CHEBI:90823"/>
    </reaction>
    <physiologicalReaction direction="left-to-right" evidence="7">
        <dbReference type="Rhea" id="RHEA:48849"/>
    </physiologicalReaction>
</comment>
<comment type="catalytic activity">
    <reaction evidence="2">
        <text>(5S)-hydroxy-(6E,8Z,11Z,14Z)-eicosatetraenoate + O2 = (5S)-hydroxy-(15S)-hydroperoxy-(6E,8Z,11Z,13E)-eicosatetraenoate</text>
        <dbReference type="Rhea" id="RHEA:53660"/>
        <dbReference type="ChEBI" id="CHEBI:15379"/>
        <dbReference type="ChEBI" id="CHEBI:90632"/>
        <dbReference type="ChEBI" id="CHEBI:137546"/>
    </reaction>
    <physiologicalReaction direction="left-to-right" evidence="2">
        <dbReference type="Rhea" id="RHEA:53661"/>
    </physiologicalReaction>
</comment>
<comment type="catalytic activity">
    <reaction evidence="2">
        <text>(5Z,8Z,11Z,14Z)-eicosatetraenoate + O2 = 5-hydroperoxy-(6E,8Z,11Z,14Z)-eicosatetraenoate</text>
        <dbReference type="Rhea" id="RHEA:48844"/>
        <dbReference type="ChEBI" id="CHEBI:15379"/>
        <dbReference type="ChEBI" id="CHEBI:32395"/>
        <dbReference type="ChEBI" id="CHEBI:90822"/>
    </reaction>
    <physiologicalReaction direction="left-to-right" evidence="2">
        <dbReference type="Rhea" id="RHEA:48845"/>
    </physiologicalReaction>
</comment>
<comment type="catalytic activity">
    <reaction evidence="2">
        <text>(5S,6R)-dihydroxy-(7E,9E,11Z,14Z)-eicosatetraenoate + O2 = (5S,6R)-dihydroxy-(15S)-hydroperoxy-(7E,9E,11Z,13E)-eicosatetraenoate</text>
        <dbReference type="Rhea" id="RHEA:53656"/>
        <dbReference type="ChEBI" id="CHEBI:15379"/>
        <dbReference type="ChEBI" id="CHEBI:137542"/>
        <dbReference type="ChEBI" id="CHEBI:137547"/>
    </reaction>
    <physiologicalReaction direction="left-to-right" evidence="2">
        <dbReference type="Rhea" id="RHEA:53657"/>
    </physiologicalReaction>
</comment>
<comment type="catalytic activity">
    <reaction evidence="2">
        <text>(5S)-hydroperoxy-(6E,8Z,11Z,14Z)-eicosatetraenoate + O2 = (5S,15S)-dihydroperoxy-(6E,8Z,11Z,13E)-eicosatetraenoate</text>
        <dbReference type="Rhea" id="RHEA:53652"/>
        <dbReference type="ChEBI" id="CHEBI:15379"/>
        <dbReference type="ChEBI" id="CHEBI:57450"/>
        <dbReference type="ChEBI" id="CHEBI:137543"/>
    </reaction>
    <physiologicalReaction direction="left-to-right" evidence="2">
        <dbReference type="Rhea" id="RHEA:53653"/>
    </physiologicalReaction>
</comment>
<comment type="catalytic activity">
    <reaction evidence="2">
        <text>2-(5Z,8Z,11Z,14Z-eicosatetraenoyl)-glycerol + O2 = 2-[15(S)-hydroperoxy-(5Z,8Z,11Z,13E)-eicosatetraenoyl]-glycerol</text>
        <dbReference type="Rhea" id="RHEA:53332"/>
        <dbReference type="ChEBI" id="CHEBI:15379"/>
        <dbReference type="ChEBI" id="CHEBI:52392"/>
        <dbReference type="ChEBI" id="CHEBI:137187"/>
    </reaction>
    <physiologicalReaction direction="left-to-right" evidence="2">
        <dbReference type="Rhea" id="RHEA:53333"/>
    </physiologicalReaction>
</comment>
<comment type="catalytic activity">
    <reaction evidence="2">
        <text>(8S)-hydroperoxy-(5Z,9E,11Z,14Z)-eicosatetraenoate + O2 = (8S,15S)-dihydroperoxy-(5Z,9E,11Z,13E)-eicosatetraenoate</text>
        <dbReference type="Rhea" id="RHEA:50932"/>
        <dbReference type="ChEBI" id="CHEBI:15379"/>
        <dbReference type="ChEBI" id="CHEBI:75322"/>
        <dbReference type="ChEBI" id="CHEBI:133899"/>
    </reaction>
    <physiologicalReaction direction="left-to-right" evidence="2">
        <dbReference type="Rhea" id="RHEA:50933"/>
    </physiologicalReaction>
</comment>
<comment type="catalytic activity">
    <reaction evidence="2">
        <text>N-(5Z,8Z,11Z,14Z)-eicosatetraenoyl-L-alanine + O2 = N-(15S)-hydroperoxy-(5Z,8Z,11Z,13E)-eicosatetraenoyl-alanine</text>
        <dbReference type="Rhea" id="RHEA:50184"/>
        <dbReference type="ChEBI" id="CHEBI:15379"/>
        <dbReference type="ChEBI" id="CHEBI:132071"/>
        <dbReference type="ChEBI" id="CHEBI:132077"/>
    </reaction>
    <physiologicalReaction direction="left-to-right" evidence="2">
        <dbReference type="Rhea" id="RHEA:50185"/>
    </physiologicalReaction>
</comment>
<comment type="catalytic activity">
    <reaction evidence="2">
        <text>N-(5Z,8Z,11Z,14Z)-eicosatetraenoyl-gamma-aminobutanoate + O2 = N-(15S)-hydroperoxy-(5Z,8Z,11Z,13E)-eicosatetraenoyl-gamma-aminobutanoate</text>
        <dbReference type="Rhea" id="RHEA:50180"/>
        <dbReference type="ChEBI" id="CHEBI:15379"/>
        <dbReference type="ChEBI" id="CHEBI:132072"/>
        <dbReference type="ChEBI" id="CHEBI:132078"/>
    </reaction>
    <physiologicalReaction direction="left-to-right" evidence="2">
        <dbReference type="Rhea" id="RHEA:50181"/>
    </physiologicalReaction>
</comment>
<comment type="catalytic activity">
    <reaction evidence="2">
        <text>N-(5Z,8Z,11Z,14Z)-eicosatetraenoyl-glycine + O2 = N-(15S)-hydroperoxy-(5Z,8Z,11Z,13E)-eicosatetraenoyl-glycine</text>
        <dbReference type="Rhea" id="RHEA:50188"/>
        <dbReference type="ChEBI" id="CHEBI:15379"/>
        <dbReference type="ChEBI" id="CHEBI:59002"/>
        <dbReference type="ChEBI" id="CHEBI:132076"/>
    </reaction>
    <physiologicalReaction direction="left-to-right" evidence="2">
        <dbReference type="Rhea" id="RHEA:50189"/>
    </physiologicalReaction>
</comment>
<comment type="catalytic activity">
    <reaction evidence="2">
        <text>N-(5Z,8Z,11Z,14Z)-eicosatetraenoyl-taurine + O2 = N-(15S)-hydroperoxy-(5Z,8Z,11Z,13E)-eicosatetraenoyl-taurine</text>
        <dbReference type="Rhea" id="RHEA:50156"/>
        <dbReference type="ChEBI" id="CHEBI:15379"/>
        <dbReference type="ChEBI" id="CHEBI:132060"/>
        <dbReference type="ChEBI" id="CHEBI:132062"/>
    </reaction>
    <physiologicalReaction direction="left-to-right" evidence="2">
        <dbReference type="Rhea" id="RHEA:50157"/>
    </physiologicalReaction>
</comment>
<comment type="catalytic activity">
    <reaction evidence="2">
        <text>2-(5Z,8Z,11Z,14Z-eicosatetraenoyl)-glycerol + O2 = 2-[12-hydroperoxy-(5Z,8Z,10E,14Z)-eicosatetraenoyl]-glycerol</text>
        <dbReference type="Rhea" id="RHEA:63224"/>
        <dbReference type="ChEBI" id="CHEBI:15379"/>
        <dbReference type="ChEBI" id="CHEBI:52392"/>
        <dbReference type="ChEBI" id="CHEBI:146254"/>
    </reaction>
    <physiologicalReaction direction="left-to-right" evidence="2">
        <dbReference type="Rhea" id="RHEA:63225"/>
    </physiologicalReaction>
</comment>
<comment type="catalytic activity">
    <reaction evidence="2">
        <text>1-octadecanoyl-2-(5Z,8Z,11Z,14Z-eicosatetraenoyl)-sn-glycero-3-phosphocholine + O2 = 1-octadecanoyl-2-(15-hydroperoxy-5Z,8Z,11Z,13E-eicosatetraenoyl)-sn-glycero-3-phosphocholine</text>
        <dbReference type="Rhea" id="RHEA:63264"/>
        <dbReference type="ChEBI" id="CHEBI:15379"/>
        <dbReference type="ChEBI" id="CHEBI:74965"/>
        <dbReference type="ChEBI" id="CHEBI:146283"/>
    </reaction>
    <physiologicalReaction direction="left-to-right" evidence="2">
        <dbReference type="Rhea" id="RHEA:63265"/>
    </physiologicalReaction>
</comment>
<comment type="catalytic activity">
    <reaction evidence="2">
        <text>a 1-acyl-2-(5Z,8Z,11Z,14Z-eicosatetraenoyl)-sn-glycero-3-phospho-(1D-myo-inositol) + O2 = a 1-acyl-2-(15-hydroperoxy-5Z,8Z,11Z,13E-eicosatetraenoyl)-sn-glycero-3-phospho-(1D-myo-inositol)</text>
        <dbReference type="Rhea" id="RHEA:63276"/>
        <dbReference type="ChEBI" id="CHEBI:15379"/>
        <dbReference type="ChEBI" id="CHEBI:75243"/>
        <dbReference type="ChEBI" id="CHEBI:146285"/>
    </reaction>
    <physiologicalReaction direction="left-to-right" evidence="2">
        <dbReference type="Rhea" id="RHEA:63277"/>
    </physiologicalReaction>
</comment>
<comment type="catalytic activity">
    <reaction evidence="2">
        <text>a 1-acyl-2-(8Z,11Z,14Z-eicosatrienoyl)-sn-glycero-3-phospho-(1D-myo-inositol) + O2 = a 1-acyl-2-(15-hydroperoxy-8Z,11Z,13E-eicosatrienoyl)-sn-glycero-3-phospho-(1D-myo-inositol)</text>
        <dbReference type="Rhea" id="RHEA:63280"/>
        <dbReference type="ChEBI" id="CHEBI:15379"/>
        <dbReference type="ChEBI" id="CHEBI:146286"/>
        <dbReference type="ChEBI" id="CHEBI:146287"/>
    </reaction>
    <physiologicalReaction direction="left-to-right" evidence="2">
        <dbReference type="Rhea" id="RHEA:63281"/>
    </physiologicalReaction>
</comment>
<comment type="catalytic activity">
    <reaction evidence="2">
        <text>1-octadecanoyl-2-(5Z,8Z,11Z,14Z)-eicosatetraenoyl-sn-glycero-3-phosphoethanolamine + O2 = 1-octadecanoyl-2-(15-hydroperoxy-5Z,8Z,11Z,13E-eicosatetraenoyl)-sn-glycero-3-phosphoethanolamine</text>
        <dbReference type="Rhea" id="RHEA:63268"/>
        <dbReference type="ChEBI" id="CHEBI:15379"/>
        <dbReference type="ChEBI" id="CHEBI:78268"/>
        <dbReference type="ChEBI" id="CHEBI:146282"/>
    </reaction>
    <physiologicalReaction direction="left-to-right" evidence="2">
        <dbReference type="Rhea" id="RHEA:63269"/>
    </physiologicalReaction>
</comment>
<comment type="catalytic activity">
    <reaction evidence="2">
        <text>1-octadecanoyl-2-(5Z,8Z,11Z,14Z-eicosatetraenoyl)-sn-glycero-3-phospho-(1D-myo-inositol) + O2 = 1-octadecanoyl-2-(15-hydroperoxy-5Z,8Z,11Z,13E-eicosatetraenoyl)-sn-glycero-3-phospho-(1D-myo-inositol)</text>
        <dbReference type="Rhea" id="RHEA:63272"/>
        <dbReference type="ChEBI" id="CHEBI:15379"/>
        <dbReference type="ChEBI" id="CHEBI:133606"/>
        <dbReference type="ChEBI" id="CHEBI:146284"/>
    </reaction>
    <physiologicalReaction direction="left-to-right" evidence="2">
        <dbReference type="Rhea" id="RHEA:63273"/>
    </physiologicalReaction>
</comment>
<comment type="catalytic activity">
    <reaction evidence="2">
        <text>(8Z,11Z,14Z)-eicosatrienoate + O2 = 15-hydroperoxy-(8Z,11Z,13E)-eicosatrienoate</text>
        <dbReference type="Rhea" id="RHEA:63312"/>
        <dbReference type="ChEBI" id="CHEBI:15379"/>
        <dbReference type="ChEBI" id="CHEBI:71589"/>
        <dbReference type="ChEBI" id="CHEBI:146292"/>
    </reaction>
    <physiologicalReaction direction="left-to-right" evidence="2">
        <dbReference type="Rhea" id="RHEA:63313"/>
    </physiologicalReaction>
</comment>
<comment type="catalytic activity">
    <reaction evidence="2">
        <text>(7S)-hydroperoxy-(4Z,8E,10Z,13Z,16Z,19Z)-docosahexaenoate + O2 = (7S,17S)-dihydroperoxy-(4Z,8E,10Z,13Z,15E,19Z)-docosahexaenoate</text>
        <dbReference type="Rhea" id="RHEA:64728"/>
        <dbReference type="ChEBI" id="CHEBI:15379"/>
        <dbReference type="ChEBI" id="CHEBI:140349"/>
        <dbReference type="ChEBI" id="CHEBI:156049"/>
    </reaction>
    <physiologicalReaction direction="left-to-right" evidence="2">
        <dbReference type="Rhea" id="RHEA:64729"/>
    </physiologicalReaction>
</comment>
<comment type="cofactor">
    <cofactor evidence="2 4">
        <name>Fe cation</name>
        <dbReference type="ChEBI" id="CHEBI:24875"/>
    </cofactor>
    <text evidence="2 4">Binds 1 Fe cation per subunit.</text>
</comment>
<comment type="pathway">
    <text evidence="5">Lipid metabolism; hydroperoxy eicosatetraenoic acid biosynthesis.</text>
</comment>
<comment type="subcellular location">
    <subcellularLocation>
        <location evidence="2">Cytoplasm</location>
        <location evidence="2">Cytosol</location>
    </subcellularLocation>
    <subcellularLocation>
        <location evidence="2">Cell membrane</location>
    </subcellularLocation>
    <subcellularLocation>
        <location evidence="2">Cytoplasm</location>
        <location evidence="2">Cytoskeleton</location>
    </subcellularLocation>
    <subcellularLocation>
        <location evidence="2">Membrane</location>
        <topology evidence="2">Peripheral membrane protein</topology>
    </subcellularLocation>
    <subcellularLocation>
        <location evidence="2">Cell junction</location>
        <location evidence="2">Adherens junction</location>
    </subcellularLocation>
    <subcellularLocation>
        <location evidence="2">Cell junction</location>
        <location evidence="2">Focal adhesion</location>
    </subcellularLocation>
    <subcellularLocation>
        <location evidence="2">Nucleus</location>
    </subcellularLocation>
    <text evidence="2">Predominantly cytosolic; becomes enriched at membranes upon calcium binding.</text>
</comment>
<comment type="domain">
    <text evidence="1">The PLAT domain can bind calcium ions; this promotes association with membranes.</text>
</comment>
<comment type="similarity">
    <text evidence="6">Belongs to the lipoxygenase family.</text>
</comment>
<gene>
    <name evidence="8" type="primary">Alox15b</name>
</gene>
<sequence length="677" mass="76145">MAKFRVRVSTGEACGAGTWDKVSVSIVGTHGESPLVPLDHLGKEFSAGAEEDFEVTLPQDVGTVLMLRIHKAPPEAPLPLLSFPPDAWYCRWFELEWLPGAALRFPCYQWLEGAGELVLREGAAKVSWQDHHRTLQDQRQKELESRKDMYSWKTYIEGWPHCLDHETVKDLDLNIKYSAMKNAKFFFKAQSAFTELKFKGLLDRTGLWRSLREMKRMFNFHNTPAAEYVFAHWQEDAFFASQFLNGLNPVLIRRCRRLPENFPVTDEMVAPVLGPGTSLQAELEKGSLFLVDHGILSGVQTNVINGKPQFSAAPMTLLYQSPGSGPLLPIAIQLKQTPGPDNPIFLPSDDKWDWLLAKTWVRNAEFSIHEALTHLLHAHLIPEVFALATLRQLPHCHPLFKLLIPHTRYTLHINTLARELLIAPGKVVDKSTGLGIGGFSDLIKRNMEQLSYSVLCLPEDIRARDVGDLPGYYYRDDGMQIWSAIRSFVSEIVDIYYPSDASVRDDQELQAWVGEIFSEGFLSQESSGMPSLLDTQEALVQYVTMVIFTCSAKHAAVSASQFDSCVWMPNLPPSMQLPPPTSKGQASPEGFIATLPAVNATCDVIIALWLLSKEPGDRRPLGHYPDEHFTEEVPRRSIAAFQRKLIQISSGIRKRNQSLALPYTYLDPPLIENSVSI</sequence>
<protein>
    <recommendedName>
        <fullName evidence="6">Polyunsaturated fatty acid lipoxygenase ALOX15B</fullName>
    </recommendedName>
    <alternativeName>
        <fullName evidence="2">15-lipoxygenase 2</fullName>
        <shortName evidence="2">15-LOX-2</shortName>
    </alternativeName>
    <alternativeName>
        <fullName>Arachidonate 15-lipoxygenase B</fullName>
        <shortName>15-LOX-B</shortName>
        <ecNumber evidence="5">1.13.11.33</ecNumber>
    </alternativeName>
    <alternativeName>
        <fullName>Arachidonate 15-lipoxygenase type II</fullName>
    </alternativeName>
    <alternativeName>
        <fullName>Linoleate 13-lipoxygenase 15-LOb</fullName>
        <ecNumber evidence="5">1.13.11.-</ecNumber>
    </alternativeName>
</protein>
<feature type="chain" id="PRO_0000220702" description="Polyunsaturated fatty acid lipoxygenase ALOX15B">
    <location>
        <begin position="1"/>
        <end position="677"/>
    </location>
</feature>
<feature type="domain" description="PLAT" evidence="3">
    <location>
        <begin position="2"/>
        <end position="125"/>
    </location>
</feature>
<feature type="domain" description="Lipoxygenase" evidence="4">
    <location>
        <begin position="126"/>
        <end position="677"/>
    </location>
</feature>
<feature type="binding site" evidence="2">
    <location>
        <position position="15"/>
    </location>
    <ligand>
        <name>Ca(2+)</name>
        <dbReference type="ChEBI" id="CHEBI:29108"/>
        <label>1</label>
    </ligand>
</feature>
<feature type="binding site" evidence="2">
    <location>
        <position position="17"/>
    </location>
    <ligand>
        <name>Ca(2+)</name>
        <dbReference type="ChEBI" id="CHEBI:29108"/>
        <label>1</label>
    </ligand>
</feature>
<feature type="binding site" evidence="2">
    <location>
        <position position="39"/>
    </location>
    <ligand>
        <name>Ca(2+)</name>
        <dbReference type="ChEBI" id="CHEBI:29108"/>
        <label>2</label>
    </ligand>
</feature>
<feature type="binding site" evidence="2">
    <location>
        <position position="40"/>
    </location>
    <ligand>
        <name>Ca(2+)</name>
        <dbReference type="ChEBI" id="CHEBI:29108"/>
        <label>2</label>
    </ligand>
</feature>
<feature type="binding site" evidence="2">
    <location>
        <position position="42"/>
    </location>
    <ligand>
        <name>Ca(2+)</name>
        <dbReference type="ChEBI" id="CHEBI:29108"/>
        <label>2</label>
    </ligand>
</feature>
<feature type="binding site" evidence="2">
    <location>
        <position position="44"/>
    </location>
    <ligand>
        <name>Ca(2+)</name>
        <dbReference type="ChEBI" id="CHEBI:29108"/>
        <label>2</label>
    </ligand>
</feature>
<feature type="binding site" evidence="2">
    <location>
        <position position="86"/>
    </location>
    <ligand>
        <name>Ca(2+)</name>
        <dbReference type="ChEBI" id="CHEBI:29108"/>
        <label>1</label>
    </ligand>
</feature>
<feature type="binding site" evidence="2">
    <location>
        <position position="87"/>
    </location>
    <ligand>
        <name>Ca(2+)</name>
        <dbReference type="ChEBI" id="CHEBI:29108"/>
        <label>1</label>
    </ligand>
</feature>
<feature type="binding site" evidence="4">
    <location>
        <position position="374"/>
    </location>
    <ligand>
        <name>Fe cation</name>
        <dbReference type="ChEBI" id="CHEBI:24875"/>
        <note>catalytic</note>
    </ligand>
</feature>
<feature type="binding site" evidence="4">
    <location>
        <position position="379"/>
    </location>
    <ligand>
        <name>Fe cation</name>
        <dbReference type="ChEBI" id="CHEBI:24875"/>
        <note>catalytic</note>
    </ligand>
</feature>
<feature type="binding site" evidence="4">
    <location>
        <position position="554"/>
    </location>
    <ligand>
        <name>Fe cation</name>
        <dbReference type="ChEBI" id="CHEBI:24875"/>
        <note>catalytic</note>
    </ligand>
</feature>
<feature type="binding site" evidence="4">
    <location>
        <position position="677"/>
    </location>
    <ligand>
        <name>Fe cation</name>
        <dbReference type="ChEBI" id="CHEBI:24875"/>
        <note>catalytic</note>
    </ligand>
</feature>
<reference key="1">
    <citation type="submission" date="2001-08" db="EMBL/GenBank/DDBJ databases">
        <title>A 15-lipoxygenase in the rat, homolog of human 15-lipoxygenase-2 and mouse 8-lipoxygenase.</title>
        <authorList>
            <person name="Boeglin W.E."/>
            <person name="Schneider C."/>
            <person name="Brash A.R."/>
        </authorList>
    </citation>
    <scope>NUCLEOTIDE SEQUENCE [MRNA]</scope>
</reference>
<reference key="2">
    <citation type="journal article" date="2013" name="FASEB J.">
        <title>Systematic analysis of rat 12/15-lipoxygenase enzymes reveals critical role for spinal eLOX3 hepoxilin synthase activity in inflammatory hyperalgesia.</title>
        <authorList>
            <person name="Gregus A.M."/>
            <person name="Dumlao D.S."/>
            <person name="Wei S.C."/>
            <person name="Norris P.C."/>
            <person name="Catella L.C."/>
            <person name="Meyerstein F.G."/>
            <person name="Buczynski M.W."/>
            <person name="Steinauer J.J."/>
            <person name="Fitzsimmons B.L."/>
            <person name="Yaksh T.L."/>
            <person name="Dennis E.A."/>
        </authorList>
    </citation>
    <scope>FUNCTION</scope>
    <scope>CATALYTIC ACTIVITY</scope>
</reference>
<name>LX15B_RAT</name>
<organism>
    <name type="scientific">Rattus norvegicus</name>
    <name type="common">Rat</name>
    <dbReference type="NCBI Taxonomy" id="10116"/>
    <lineage>
        <taxon>Eukaryota</taxon>
        <taxon>Metazoa</taxon>
        <taxon>Chordata</taxon>
        <taxon>Craniata</taxon>
        <taxon>Vertebrata</taxon>
        <taxon>Euteleostomi</taxon>
        <taxon>Mammalia</taxon>
        <taxon>Eutheria</taxon>
        <taxon>Euarchontoglires</taxon>
        <taxon>Glires</taxon>
        <taxon>Rodentia</taxon>
        <taxon>Myomorpha</taxon>
        <taxon>Muroidea</taxon>
        <taxon>Muridae</taxon>
        <taxon>Murinae</taxon>
        <taxon>Rattus</taxon>
    </lineage>
</organism>
<accession>Q8K4F2</accession>
<evidence type="ECO:0000250" key="1"/>
<evidence type="ECO:0000250" key="2">
    <source>
        <dbReference type="UniProtKB" id="O15296"/>
    </source>
</evidence>
<evidence type="ECO:0000255" key="3">
    <source>
        <dbReference type="PROSITE-ProRule" id="PRU00152"/>
    </source>
</evidence>
<evidence type="ECO:0000255" key="4">
    <source>
        <dbReference type="PROSITE-ProRule" id="PRU00726"/>
    </source>
</evidence>
<evidence type="ECO:0000269" key="5">
    <source>
    </source>
</evidence>
<evidence type="ECO:0000305" key="6"/>
<evidence type="ECO:0000305" key="7">
    <source>
    </source>
</evidence>
<evidence type="ECO:0000312" key="8">
    <source>
        <dbReference type="RGD" id="628809"/>
    </source>
</evidence>